<sequence length="70" mass="7832">MVSVCRPWPAVAIALLALLVCLGALVDTCPIKPEAPGEDESLEELSHYYASLCHYLNVVTRQWWEGADMW</sequence>
<comment type="subcellular location">
    <subcellularLocation>
        <location evidence="1">Secreted</location>
    </subcellularLocation>
</comment>
<comment type="similarity">
    <text evidence="3">Belongs to the NPY family.</text>
</comment>
<comment type="caution">
    <text evidence="3">Could be the product of a pseudogene.</text>
</comment>
<gene>
    <name type="primary">PYY3</name>
</gene>
<protein>
    <recommendedName>
        <fullName>Putative peptide YY-3</fullName>
        <shortName>Putative peptide YY3</shortName>
    </recommendedName>
    <alternativeName>
        <fullName>PYY-III</fullName>
    </alternativeName>
</protein>
<dbReference type="EMBL" id="FO393402">
    <property type="status" value="NOT_ANNOTATED_CDS"/>
    <property type="molecule type" value="Genomic_DNA"/>
</dbReference>
<dbReference type="SMR" id="Q5JQD4"/>
<dbReference type="BioMuta" id="HGNC:31855"/>
<dbReference type="AGR" id="HGNC:31855"/>
<dbReference type="GeneCards" id="PYY3"/>
<dbReference type="HGNC" id="HGNC:31855">
    <property type="gene designation" value="PYY3"/>
</dbReference>
<dbReference type="neXtProt" id="NX_Q5JQD4"/>
<dbReference type="InParanoid" id="Q5JQD4"/>
<dbReference type="PAN-GO" id="Q5JQD4">
    <property type="GO annotations" value="5 GO annotations based on evolutionary models"/>
</dbReference>
<dbReference type="PhylomeDB" id="Q5JQD4"/>
<dbReference type="Pharos" id="Q5JQD4">
    <property type="development level" value="Tdark"/>
</dbReference>
<dbReference type="Proteomes" id="UP000005640">
    <property type="component" value="Unplaced"/>
</dbReference>
<dbReference type="RNAct" id="Q5JQD4">
    <property type="molecule type" value="protein"/>
</dbReference>
<dbReference type="GO" id="GO:0005615">
    <property type="term" value="C:extracellular space"/>
    <property type="evidence" value="ECO:0000318"/>
    <property type="project" value="GO_Central"/>
</dbReference>
<dbReference type="GO" id="GO:0005184">
    <property type="term" value="F:neuropeptide hormone activity"/>
    <property type="evidence" value="ECO:0000318"/>
    <property type="project" value="GO_Central"/>
</dbReference>
<dbReference type="GO" id="GO:0031841">
    <property type="term" value="F:neuropeptide Y receptor binding"/>
    <property type="evidence" value="ECO:0000318"/>
    <property type="project" value="GO_Central"/>
</dbReference>
<dbReference type="GO" id="GO:0007631">
    <property type="term" value="P:feeding behavior"/>
    <property type="evidence" value="ECO:0000318"/>
    <property type="project" value="GO_Central"/>
</dbReference>
<dbReference type="GO" id="GO:0007218">
    <property type="term" value="P:neuropeptide signaling pathway"/>
    <property type="evidence" value="ECO:0000318"/>
    <property type="project" value="GO_Central"/>
</dbReference>
<dbReference type="CDD" id="cd00126">
    <property type="entry name" value="PAH"/>
    <property type="match status" value="1"/>
</dbReference>
<dbReference type="Gene3D" id="6.10.250.900">
    <property type="match status" value="1"/>
</dbReference>
<dbReference type="InterPro" id="IPR001955">
    <property type="entry name" value="Pancreatic_hormone-like"/>
</dbReference>
<dbReference type="PANTHER" id="PTHR10533">
    <property type="entry name" value="NEUROPEPTIDE Y/PANCREATIC HORMONE/PEPTIDE YY"/>
    <property type="match status" value="1"/>
</dbReference>
<dbReference type="PANTHER" id="PTHR10533:SF14">
    <property type="entry name" value="PEPTIDE YY-RELATED"/>
    <property type="match status" value="1"/>
</dbReference>
<dbReference type="Pfam" id="PF00159">
    <property type="entry name" value="Hormone_3"/>
    <property type="match status" value="1"/>
</dbReference>
<dbReference type="PRINTS" id="PR00278">
    <property type="entry name" value="PANCHORMONE"/>
</dbReference>
<dbReference type="SMART" id="SM00309">
    <property type="entry name" value="PAH"/>
    <property type="match status" value="1"/>
</dbReference>
<dbReference type="PROSITE" id="PS50276">
    <property type="entry name" value="PANCREATIC_HORMONE_2"/>
    <property type="match status" value="1"/>
</dbReference>
<accession>Q5JQD4</accession>
<proteinExistence type="uncertain"/>
<organism>
    <name type="scientific">Homo sapiens</name>
    <name type="common">Human</name>
    <dbReference type="NCBI Taxonomy" id="9606"/>
    <lineage>
        <taxon>Eukaryota</taxon>
        <taxon>Metazoa</taxon>
        <taxon>Chordata</taxon>
        <taxon>Craniata</taxon>
        <taxon>Vertebrata</taxon>
        <taxon>Euteleostomi</taxon>
        <taxon>Mammalia</taxon>
        <taxon>Eutheria</taxon>
        <taxon>Euarchontoglires</taxon>
        <taxon>Primates</taxon>
        <taxon>Haplorrhini</taxon>
        <taxon>Catarrhini</taxon>
        <taxon>Hominidae</taxon>
        <taxon>Homo</taxon>
    </lineage>
</organism>
<feature type="signal peptide" evidence="2">
    <location>
        <begin position="1"/>
        <end position="23"/>
    </location>
</feature>
<feature type="chain" id="PRO_0000341244" description="Putative peptide YY-3">
    <location>
        <begin position="24"/>
        <end position="70"/>
    </location>
</feature>
<feature type="sequence variant" id="VAR_044033" description="In dbSNP:rs5953365.">
    <original>T</original>
    <variation>I</variation>
    <location>
        <position position="28"/>
    </location>
</feature>
<reference key="1">
    <citation type="journal article" date="2005" name="Nature">
        <title>The DNA sequence of the human X chromosome.</title>
        <authorList>
            <person name="Ross M.T."/>
            <person name="Grafham D.V."/>
            <person name="Coffey A.J."/>
            <person name="Scherer S."/>
            <person name="McLay K."/>
            <person name="Muzny D."/>
            <person name="Platzer M."/>
            <person name="Howell G.R."/>
            <person name="Burrows C."/>
            <person name="Bird C.P."/>
            <person name="Frankish A."/>
            <person name="Lovell F.L."/>
            <person name="Howe K.L."/>
            <person name="Ashurst J.L."/>
            <person name="Fulton R.S."/>
            <person name="Sudbrak R."/>
            <person name="Wen G."/>
            <person name="Jones M.C."/>
            <person name="Hurles M.E."/>
            <person name="Andrews T.D."/>
            <person name="Scott C.E."/>
            <person name="Searle S."/>
            <person name="Ramser J."/>
            <person name="Whittaker A."/>
            <person name="Deadman R."/>
            <person name="Carter N.P."/>
            <person name="Hunt S.E."/>
            <person name="Chen R."/>
            <person name="Cree A."/>
            <person name="Gunaratne P."/>
            <person name="Havlak P."/>
            <person name="Hodgson A."/>
            <person name="Metzker M.L."/>
            <person name="Richards S."/>
            <person name="Scott G."/>
            <person name="Steffen D."/>
            <person name="Sodergren E."/>
            <person name="Wheeler D.A."/>
            <person name="Worley K.C."/>
            <person name="Ainscough R."/>
            <person name="Ambrose K.D."/>
            <person name="Ansari-Lari M.A."/>
            <person name="Aradhya S."/>
            <person name="Ashwell R.I."/>
            <person name="Babbage A.K."/>
            <person name="Bagguley C.L."/>
            <person name="Ballabio A."/>
            <person name="Banerjee R."/>
            <person name="Barker G.E."/>
            <person name="Barlow K.F."/>
            <person name="Barrett I.P."/>
            <person name="Bates K.N."/>
            <person name="Beare D.M."/>
            <person name="Beasley H."/>
            <person name="Beasley O."/>
            <person name="Beck A."/>
            <person name="Bethel G."/>
            <person name="Blechschmidt K."/>
            <person name="Brady N."/>
            <person name="Bray-Allen S."/>
            <person name="Bridgeman A.M."/>
            <person name="Brown A.J."/>
            <person name="Brown M.J."/>
            <person name="Bonnin D."/>
            <person name="Bruford E.A."/>
            <person name="Buhay C."/>
            <person name="Burch P."/>
            <person name="Burford D."/>
            <person name="Burgess J."/>
            <person name="Burrill W."/>
            <person name="Burton J."/>
            <person name="Bye J.M."/>
            <person name="Carder C."/>
            <person name="Carrel L."/>
            <person name="Chako J."/>
            <person name="Chapman J.C."/>
            <person name="Chavez D."/>
            <person name="Chen E."/>
            <person name="Chen G."/>
            <person name="Chen Y."/>
            <person name="Chen Z."/>
            <person name="Chinault C."/>
            <person name="Ciccodicola A."/>
            <person name="Clark S.Y."/>
            <person name="Clarke G."/>
            <person name="Clee C.M."/>
            <person name="Clegg S."/>
            <person name="Clerc-Blankenburg K."/>
            <person name="Clifford K."/>
            <person name="Cobley V."/>
            <person name="Cole C.G."/>
            <person name="Conquer J.S."/>
            <person name="Corby N."/>
            <person name="Connor R.E."/>
            <person name="David R."/>
            <person name="Davies J."/>
            <person name="Davis C."/>
            <person name="Davis J."/>
            <person name="Delgado O."/>
            <person name="Deshazo D."/>
            <person name="Dhami P."/>
            <person name="Ding Y."/>
            <person name="Dinh H."/>
            <person name="Dodsworth S."/>
            <person name="Draper H."/>
            <person name="Dugan-Rocha S."/>
            <person name="Dunham A."/>
            <person name="Dunn M."/>
            <person name="Durbin K.J."/>
            <person name="Dutta I."/>
            <person name="Eades T."/>
            <person name="Ellwood M."/>
            <person name="Emery-Cohen A."/>
            <person name="Errington H."/>
            <person name="Evans K.L."/>
            <person name="Faulkner L."/>
            <person name="Francis F."/>
            <person name="Frankland J."/>
            <person name="Fraser A.E."/>
            <person name="Galgoczy P."/>
            <person name="Gilbert J."/>
            <person name="Gill R."/>
            <person name="Gloeckner G."/>
            <person name="Gregory S.G."/>
            <person name="Gribble S."/>
            <person name="Griffiths C."/>
            <person name="Grocock R."/>
            <person name="Gu Y."/>
            <person name="Gwilliam R."/>
            <person name="Hamilton C."/>
            <person name="Hart E.A."/>
            <person name="Hawes A."/>
            <person name="Heath P.D."/>
            <person name="Heitmann K."/>
            <person name="Hennig S."/>
            <person name="Hernandez J."/>
            <person name="Hinzmann B."/>
            <person name="Ho S."/>
            <person name="Hoffs M."/>
            <person name="Howden P.J."/>
            <person name="Huckle E.J."/>
            <person name="Hume J."/>
            <person name="Hunt P.J."/>
            <person name="Hunt A.R."/>
            <person name="Isherwood J."/>
            <person name="Jacob L."/>
            <person name="Johnson D."/>
            <person name="Jones S."/>
            <person name="de Jong P.J."/>
            <person name="Joseph S.S."/>
            <person name="Keenan S."/>
            <person name="Kelly S."/>
            <person name="Kershaw J.K."/>
            <person name="Khan Z."/>
            <person name="Kioschis P."/>
            <person name="Klages S."/>
            <person name="Knights A.J."/>
            <person name="Kosiura A."/>
            <person name="Kovar-Smith C."/>
            <person name="Laird G.K."/>
            <person name="Langford C."/>
            <person name="Lawlor S."/>
            <person name="Leversha M."/>
            <person name="Lewis L."/>
            <person name="Liu W."/>
            <person name="Lloyd C."/>
            <person name="Lloyd D.M."/>
            <person name="Loulseged H."/>
            <person name="Loveland J.E."/>
            <person name="Lovell J.D."/>
            <person name="Lozado R."/>
            <person name="Lu J."/>
            <person name="Lyne R."/>
            <person name="Ma J."/>
            <person name="Maheshwari M."/>
            <person name="Matthews L.H."/>
            <person name="McDowall J."/>
            <person name="McLaren S."/>
            <person name="McMurray A."/>
            <person name="Meidl P."/>
            <person name="Meitinger T."/>
            <person name="Milne S."/>
            <person name="Miner G."/>
            <person name="Mistry S.L."/>
            <person name="Morgan M."/>
            <person name="Morris S."/>
            <person name="Mueller I."/>
            <person name="Mullikin J.C."/>
            <person name="Nguyen N."/>
            <person name="Nordsiek G."/>
            <person name="Nyakatura G."/>
            <person name="O'dell C.N."/>
            <person name="Okwuonu G."/>
            <person name="Palmer S."/>
            <person name="Pandian R."/>
            <person name="Parker D."/>
            <person name="Parrish J."/>
            <person name="Pasternak S."/>
            <person name="Patel D."/>
            <person name="Pearce A.V."/>
            <person name="Pearson D.M."/>
            <person name="Pelan S.E."/>
            <person name="Perez L."/>
            <person name="Porter K.M."/>
            <person name="Ramsey Y."/>
            <person name="Reichwald K."/>
            <person name="Rhodes S."/>
            <person name="Ridler K.A."/>
            <person name="Schlessinger D."/>
            <person name="Schueler M.G."/>
            <person name="Sehra H.K."/>
            <person name="Shaw-Smith C."/>
            <person name="Shen H."/>
            <person name="Sheridan E.M."/>
            <person name="Shownkeen R."/>
            <person name="Skuce C.D."/>
            <person name="Smith M.L."/>
            <person name="Sotheran E.C."/>
            <person name="Steingruber H.E."/>
            <person name="Steward C.A."/>
            <person name="Storey R."/>
            <person name="Swann R.M."/>
            <person name="Swarbreck D."/>
            <person name="Tabor P.E."/>
            <person name="Taudien S."/>
            <person name="Taylor T."/>
            <person name="Teague B."/>
            <person name="Thomas K."/>
            <person name="Thorpe A."/>
            <person name="Timms K."/>
            <person name="Tracey A."/>
            <person name="Trevanion S."/>
            <person name="Tromans A.C."/>
            <person name="d'Urso M."/>
            <person name="Verduzco D."/>
            <person name="Villasana D."/>
            <person name="Waldron L."/>
            <person name="Wall M."/>
            <person name="Wang Q."/>
            <person name="Warren J."/>
            <person name="Warry G.L."/>
            <person name="Wei X."/>
            <person name="West A."/>
            <person name="Whitehead S.L."/>
            <person name="Whiteley M.N."/>
            <person name="Wilkinson J.E."/>
            <person name="Willey D.L."/>
            <person name="Williams G."/>
            <person name="Williams L."/>
            <person name="Williamson A."/>
            <person name="Williamson H."/>
            <person name="Wilming L."/>
            <person name="Woodmansey R.L."/>
            <person name="Wray P.W."/>
            <person name="Yen J."/>
            <person name="Zhang J."/>
            <person name="Zhou J."/>
            <person name="Zoghbi H."/>
            <person name="Zorilla S."/>
            <person name="Buck D."/>
            <person name="Reinhardt R."/>
            <person name="Poustka A."/>
            <person name="Rosenthal A."/>
            <person name="Lehrach H."/>
            <person name="Meindl A."/>
            <person name="Minx P.J."/>
            <person name="Hillier L.W."/>
            <person name="Willard H.F."/>
            <person name="Wilson R.K."/>
            <person name="Waterston R.H."/>
            <person name="Rice C.M."/>
            <person name="Vaudin M."/>
            <person name="Coulson A."/>
            <person name="Nelson D.L."/>
            <person name="Weinstock G."/>
            <person name="Sulston J.E."/>
            <person name="Durbin R.M."/>
            <person name="Hubbard T."/>
            <person name="Gibbs R.A."/>
            <person name="Beck S."/>
            <person name="Rogers J."/>
            <person name="Bentley D.R."/>
        </authorList>
    </citation>
    <scope>NUCLEOTIDE SEQUENCE [LARGE SCALE GENOMIC DNA]</scope>
</reference>
<evidence type="ECO:0000250" key="1"/>
<evidence type="ECO:0000255" key="2"/>
<evidence type="ECO:0000305" key="3"/>
<keyword id="KW-1185">Reference proteome</keyword>
<keyword id="KW-0964">Secreted</keyword>
<keyword id="KW-0732">Signal</keyword>
<name>PYY3_HUMAN</name>